<organism>
    <name type="scientific">Campylobacter concisus (strain 13826)</name>
    <dbReference type="NCBI Taxonomy" id="360104"/>
    <lineage>
        <taxon>Bacteria</taxon>
        <taxon>Pseudomonadati</taxon>
        <taxon>Campylobacterota</taxon>
        <taxon>Epsilonproteobacteria</taxon>
        <taxon>Campylobacterales</taxon>
        <taxon>Campylobacteraceae</taxon>
        <taxon>Campylobacter</taxon>
    </lineage>
</organism>
<reference key="1">
    <citation type="submission" date="2007-10" db="EMBL/GenBank/DDBJ databases">
        <title>Genome sequence of Campylobacter concisus 13826 isolated from human feces.</title>
        <authorList>
            <person name="Fouts D.E."/>
            <person name="Mongodin E.F."/>
            <person name="Puiu D."/>
            <person name="Sebastian Y."/>
            <person name="Miller W.G."/>
            <person name="Mandrell R.E."/>
            <person name="On S."/>
            <person name="Nelson K.E."/>
        </authorList>
    </citation>
    <scope>NUCLEOTIDE SEQUENCE [LARGE SCALE GENOMIC DNA]</scope>
    <source>
        <strain>13826</strain>
    </source>
</reference>
<keyword id="KW-0997">Cell inner membrane</keyword>
<keyword id="KW-1003">Cell membrane</keyword>
<keyword id="KW-0963">Cytoplasm</keyword>
<keyword id="KW-0342">GTP-binding</keyword>
<keyword id="KW-0472">Membrane</keyword>
<keyword id="KW-0547">Nucleotide-binding</keyword>
<keyword id="KW-0690">Ribosome biogenesis</keyword>
<keyword id="KW-0694">RNA-binding</keyword>
<keyword id="KW-0699">rRNA-binding</keyword>
<feature type="chain" id="PRO_1000079662" description="GTPase Era">
    <location>
        <begin position="1"/>
        <end position="289"/>
    </location>
</feature>
<feature type="domain" description="Era-type G" evidence="2">
    <location>
        <begin position="2"/>
        <end position="167"/>
    </location>
</feature>
<feature type="domain" description="KH type-2" evidence="1">
    <location>
        <begin position="194"/>
        <end position="274"/>
    </location>
</feature>
<feature type="region of interest" description="G1" evidence="2">
    <location>
        <begin position="10"/>
        <end position="17"/>
    </location>
</feature>
<feature type="region of interest" description="G2" evidence="2">
    <location>
        <begin position="36"/>
        <end position="40"/>
    </location>
</feature>
<feature type="region of interest" description="G3" evidence="2">
    <location>
        <begin position="57"/>
        <end position="60"/>
    </location>
</feature>
<feature type="region of interest" description="G4" evidence="2">
    <location>
        <begin position="116"/>
        <end position="119"/>
    </location>
</feature>
<feature type="region of interest" description="G5" evidence="2">
    <location>
        <begin position="146"/>
        <end position="148"/>
    </location>
</feature>
<feature type="binding site" evidence="1">
    <location>
        <begin position="10"/>
        <end position="17"/>
    </location>
    <ligand>
        <name>GTP</name>
        <dbReference type="ChEBI" id="CHEBI:37565"/>
    </ligand>
</feature>
<feature type="binding site" evidence="1">
    <location>
        <begin position="57"/>
        <end position="61"/>
    </location>
    <ligand>
        <name>GTP</name>
        <dbReference type="ChEBI" id="CHEBI:37565"/>
    </ligand>
</feature>
<feature type="binding site" evidence="1">
    <location>
        <begin position="116"/>
        <end position="119"/>
    </location>
    <ligand>
        <name>GTP</name>
        <dbReference type="ChEBI" id="CHEBI:37565"/>
    </ligand>
</feature>
<proteinExistence type="inferred from homology"/>
<dbReference type="EMBL" id="CP000792">
    <property type="protein sequence ID" value="EAT98676.1"/>
    <property type="molecule type" value="Genomic_DNA"/>
</dbReference>
<dbReference type="RefSeq" id="WP_012001742.1">
    <property type="nucleotide sequence ID" value="NC_009802.2"/>
</dbReference>
<dbReference type="SMR" id="A7ZDF6"/>
<dbReference type="STRING" id="360104.CCC13826_1223"/>
<dbReference type="KEGG" id="cco:CCC13826_1223"/>
<dbReference type="eggNOG" id="COG1159">
    <property type="taxonomic scope" value="Bacteria"/>
</dbReference>
<dbReference type="HOGENOM" id="CLU_038009_1_0_7"/>
<dbReference type="OrthoDB" id="9805918at2"/>
<dbReference type="Proteomes" id="UP000001121">
    <property type="component" value="Chromosome"/>
</dbReference>
<dbReference type="GO" id="GO:0005829">
    <property type="term" value="C:cytosol"/>
    <property type="evidence" value="ECO:0007669"/>
    <property type="project" value="TreeGrafter"/>
</dbReference>
<dbReference type="GO" id="GO:0005886">
    <property type="term" value="C:plasma membrane"/>
    <property type="evidence" value="ECO:0007669"/>
    <property type="project" value="UniProtKB-SubCell"/>
</dbReference>
<dbReference type="GO" id="GO:0005525">
    <property type="term" value="F:GTP binding"/>
    <property type="evidence" value="ECO:0007669"/>
    <property type="project" value="UniProtKB-UniRule"/>
</dbReference>
<dbReference type="GO" id="GO:0003924">
    <property type="term" value="F:GTPase activity"/>
    <property type="evidence" value="ECO:0007669"/>
    <property type="project" value="UniProtKB-UniRule"/>
</dbReference>
<dbReference type="GO" id="GO:0043024">
    <property type="term" value="F:ribosomal small subunit binding"/>
    <property type="evidence" value="ECO:0007669"/>
    <property type="project" value="TreeGrafter"/>
</dbReference>
<dbReference type="GO" id="GO:0070181">
    <property type="term" value="F:small ribosomal subunit rRNA binding"/>
    <property type="evidence" value="ECO:0007669"/>
    <property type="project" value="UniProtKB-UniRule"/>
</dbReference>
<dbReference type="GO" id="GO:0000028">
    <property type="term" value="P:ribosomal small subunit assembly"/>
    <property type="evidence" value="ECO:0007669"/>
    <property type="project" value="TreeGrafter"/>
</dbReference>
<dbReference type="CDD" id="cd04163">
    <property type="entry name" value="Era"/>
    <property type="match status" value="1"/>
</dbReference>
<dbReference type="CDD" id="cd22534">
    <property type="entry name" value="KH-II_Era"/>
    <property type="match status" value="1"/>
</dbReference>
<dbReference type="Gene3D" id="3.30.300.20">
    <property type="match status" value="1"/>
</dbReference>
<dbReference type="Gene3D" id="3.40.50.300">
    <property type="entry name" value="P-loop containing nucleotide triphosphate hydrolases"/>
    <property type="match status" value="1"/>
</dbReference>
<dbReference type="HAMAP" id="MF_00367">
    <property type="entry name" value="GTPase_Era"/>
    <property type="match status" value="1"/>
</dbReference>
<dbReference type="InterPro" id="IPR030388">
    <property type="entry name" value="G_ERA_dom"/>
</dbReference>
<dbReference type="InterPro" id="IPR006073">
    <property type="entry name" value="GTP-bd"/>
</dbReference>
<dbReference type="InterPro" id="IPR005662">
    <property type="entry name" value="GTPase_Era-like"/>
</dbReference>
<dbReference type="InterPro" id="IPR015946">
    <property type="entry name" value="KH_dom-like_a/b"/>
</dbReference>
<dbReference type="InterPro" id="IPR004044">
    <property type="entry name" value="KH_dom_type_2"/>
</dbReference>
<dbReference type="InterPro" id="IPR009019">
    <property type="entry name" value="KH_sf_prok-type"/>
</dbReference>
<dbReference type="InterPro" id="IPR027417">
    <property type="entry name" value="P-loop_NTPase"/>
</dbReference>
<dbReference type="InterPro" id="IPR005225">
    <property type="entry name" value="Small_GTP-bd"/>
</dbReference>
<dbReference type="NCBIfam" id="TIGR00436">
    <property type="entry name" value="era"/>
    <property type="match status" value="1"/>
</dbReference>
<dbReference type="NCBIfam" id="NF000908">
    <property type="entry name" value="PRK00089.1"/>
    <property type="match status" value="1"/>
</dbReference>
<dbReference type="NCBIfam" id="TIGR00231">
    <property type="entry name" value="small_GTP"/>
    <property type="match status" value="1"/>
</dbReference>
<dbReference type="PANTHER" id="PTHR42698">
    <property type="entry name" value="GTPASE ERA"/>
    <property type="match status" value="1"/>
</dbReference>
<dbReference type="PANTHER" id="PTHR42698:SF1">
    <property type="entry name" value="GTPASE ERA, MITOCHONDRIAL"/>
    <property type="match status" value="1"/>
</dbReference>
<dbReference type="Pfam" id="PF07650">
    <property type="entry name" value="KH_2"/>
    <property type="match status" value="1"/>
</dbReference>
<dbReference type="Pfam" id="PF01926">
    <property type="entry name" value="MMR_HSR1"/>
    <property type="match status" value="1"/>
</dbReference>
<dbReference type="SUPFAM" id="SSF52540">
    <property type="entry name" value="P-loop containing nucleoside triphosphate hydrolases"/>
    <property type="match status" value="1"/>
</dbReference>
<dbReference type="SUPFAM" id="SSF54814">
    <property type="entry name" value="Prokaryotic type KH domain (KH-domain type II)"/>
    <property type="match status" value="1"/>
</dbReference>
<dbReference type="PROSITE" id="PS51713">
    <property type="entry name" value="G_ERA"/>
    <property type="match status" value="1"/>
</dbReference>
<dbReference type="PROSITE" id="PS50823">
    <property type="entry name" value="KH_TYPE_2"/>
    <property type="match status" value="1"/>
</dbReference>
<name>ERA_CAMC1</name>
<accession>A7ZDF6</accession>
<sequence length="289" mass="32857">MKSGFVSIIGRTNAGKSSFLNALLNEKIAIVSHKQNATRRKINGIVMNGEDQIIFTDTPGLHESNKAINQLLISQAIKSMGDCDLIVFLAPIHDDTSDYEKFLALNPEKPHILVLTKVDESSNAKVLEKITKYQKFQDKFAALLTFSTKQPTYKKPLLDEICKLLPEHEYFYDPEFLTPTNEKEIFREFILEAIYENLSDEIPYLSDAIIKSVKEKTGITEIYASIITERDIHKSMIIGKNGETIKRIGIFARKLIQNLTNTKVFLKLDVVVKKGWSKEEKSLNQIIGY</sequence>
<protein>
    <recommendedName>
        <fullName evidence="1">GTPase Era</fullName>
    </recommendedName>
</protein>
<gene>
    <name evidence="1" type="primary">era</name>
    <name type="ordered locus">Ccon26_09460</name>
    <name type="ORF">CCC13826_1223</name>
</gene>
<comment type="function">
    <text evidence="1">An essential GTPase that binds both GDP and GTP, with rapid nucleotide exchange. Plays a role in 16S rRNA processing and 30S ribosomal subunit biogenesis and possibly also in cell cycle regulation and energy metabolism.</text>
</comment>
<comment type="subunit">
    <text evidence="1">Monomer.</text>
</comment>
<comment type="subcellular location">
    <subcellularLocation>
        <location>Cytoplasm</location>
    </subcellularLocation>
    <subcellularLocation>
        <location evidence="1">Cell inner membrane</location>
        <topology evidence="1">Peripheral membrane protein</topology>
    </subcellularLocation>
</comment>
<comment type="similarity">
    <text evidence="1 2">Belongs to the TRAFAC class TrmE-Era-EngA-EngB-Septin-like GTPase superfamily. Era GTPase family.</text>
</comment>
<evidence type="ECO:0000255" key="1">
    <source>
        <dbReference type="HAMAP-Rule" id="MF_00367"/>
    </source>
</evidence>
<evidence type="ECO:0000255" key="2">
    <source>
        <dbReference type="PROSITE-ProRule" id="PRU01050"/>
    </source>
</evidence>